<reference key="1">
    <citation type="journal article" date="2009" name="PLoS Biol.">
        <title>Lineage-specific biology revealed by a finished genome assembly of the mouse.</title>
        <authorList>
            <person name="Church D.M."/>
            <person name="Goodstadt L."/>
            <person name="Hillier L.W."/>
            <person name="Zody M.C."/>
            <person name="Goldstein S."/>
            <person name="She X."/>
            <person name="Bult C.J."/>
            <person name="Agarwala R."/>
            <person name="Cherry J.L."/>
            <person name="DiCuccio M."/>
            <person name="Hlavina W."/>
            <person name="Kapustin Y."/>
            <person name="Meric P."/>
            <person name="Maglott D."/>
            <person name="Birtle Z."/>
            <person name="Marques A.C."/>
            <person name="Graves T."/>
            <person name="Zhou S."/>
            <person name="Teague B."/>
            <person name="Potamousis K."/>
            <person name="Churas C."/>
            <person name="Place M."/>
            <person name="Herschleb J."/>
            <person name="Runnheim R."/>
            <person name="Forrest D."/>
            <person name="Amos-Landgraf J."/>
            <person name="Schwartz D.C."/>
            <person name="Cheng Z."/>
            <person name="Lindblad-Toh K."/>
            <person name="Eichler E.E."/>
            <person name="Ponting C.P."/>
        </authorList>
    </citation>
    <scope>NUCLEOTIDE SEQUENCE [LARGE SCALE GENOMIC DNA]</scope>
    <source>
        <strain>C57BL/6J</strain>
    </source>
</reference>
<reference key="2">
    <citation type="journal article" date="2004" name="Genome Res.">
        <title>The status, quality, and expansion of the NIH full-length cDNA project: the Mammalian Gene Collection (MGC).</title>
        <authorList>
            <consortium name="The MGC Project Team"/>
        </authorList>
    </citation>
    <scope>NUCLEOTIDE SEQUENCE [LARGE SCALE MRNA]</scope>
    <source>
        <strain>FVB/N</strain>
        <tissue>Brain</tissue>
        <tissue>Mammary tumor</tissue>
        <tissue>Olfactory epithelium</tissue>
    </source>
</reference>
<reference key="3">
    <citation type="journal article" date="2005" name="Science">
        <title>The transcriptional landscape of the mammalian genome.</title>
        <authorList>
            <person name="Carninci P."/>
            <person name="Kasukawa T."/>
            <person name="Katayama S."/>
            <person name="Gough J."/>
            <person name="Frith M.C."/>
            <person name="Maeda N."/>
            <person name="Oyama R."/>
            <person name="Ravasi T."/>
            <person name="Lenhard B."/>
            <person name="Wells C."/>
            <person name="Kodzius R."/>
            <person name="Shimokawa K."/>
            <person name="Bajic V.B."/>
            <person name="Brenner S.E."/>
            <person name="Batalov S."/>
            <person name="Forrest A.R."/>
            <person name="Zavolan M."/>
            <person name="Davis M.J."/>
            <person name="Wilming L.G."/>
            <person name="Aidinis V."/>
            <person name="Allen J.E."/>
            <person name="Ambesi-Impiombato A."/>
            <person name="Apweiler R."/>
            <person name="Aturaliya R.N."/>
            <person name="Bailey T.L."/>
            <person name="Bansal M."/>
            <person name="Baxter L."/>
            <person name="Beisel K.W."/>
            <person name="Bersano T."/>
            <person name="Bono H."/>
            <person name="Chalk A.M."/>
            <person name="Chiu K.P."/>
            <person name="Choudhary V."/>
            <person name="Christoffels A."/>
            <person name="Clutterbuck D.R."/>
            <person name="Crowe M.L."/>
            <person name="Dalla E."/>
            <person name="Dalrymple B.P."/>
            <person name="de Bono B."/>
            <person name="Della Gatta G."/>
            <person name="di Bernardo D."/>
            <person name="Down T."/>
            <person name="Engstrom P."/>
            <person name="Fagiolini M."/>
            <person name="Faulkner G."/>
            <person name="Fletcher C.F."/>
            <person name="Fukushima T."/>
            <person name="Furuno M."/>
            <person name="Futaki S."/>
            <person name="Gariboldi M."/>
            <person name="Georgii-Hemming P."/>
            <person name="Gingeras T.R."/>
            <person name="Gojobori T."/>
            <person name="Green R.E."/>
            <person name="Gustincich S."/>
            <person name="Harbers M."/>
            <person name="Hayashi Y."/>
            <person name="Hensch T.K."/>
            <person name="Hirokawa N."/>
            <person name="Hill D."/>
            <person name="Huminiecki L."/>
            <person name="Iacono M."/>
            <person name="Ikeo K."/>
            <person name="Iwama A."/>
            <person name="Ishikawa T."/>
            <person name="Jakt M."/>
            <person name="Kanapin A."/>
            <person name="Katoh M."/>
            <person name="Kawasawa Y."/>
            <person name="Kelso J."/>
            <person name="Kitamura H."/>
            <person name="Kitano H."/>
            <person name="Kollias G."/>
            <person name="Krishnan S.P."/>
            <person name="Kruger A."/>
            <person name="Kummerfeld S.K."/>
            <person name="Kurochkin I.V."/>
            <person name="Lareau L.F."/>
            <person name="Lazarevic D."/>
            <person name="Lipovich L."/>
            <person name="Liu J."/>
            <person name="Liuni S."/>
            <person name="McWilliam S."/>
            <person name="Madan Babu M."/>
            <person name="Madera M."/>
            <person name="Marchionni L."/>
            <person name="Matsuda H."/>
            <person name="Matsuzawa S."/>
            <person name="Miki H."/>
            <person name="Mignone F."/>
            <person name="Miyake S."/>
            <person name="Morris K."/>
            <person name="Mottagui-Tabar S."/>
            <person name="Mulder N."/>
            <person name="Nakano N."/>
            <person name="Nakauchi H."/>
            <person name="Ng P."/>
            <person name="Nilsson R."/>
            <person name="Nishiguchi S."/>
            <person name="Nishikawa S."/>
            <person name="Nori F."/>
            <person name="Ohara O."/>
            <person name="Okazaki Y."/>
            <person name="Orlando V."/>
            <person name="Pang K.C."/>
            <person name="Pavan W.J."/>
            <person name="Pavesi G."/>
            <person name="Pesole G."/>
            <person name="Petrovsky N."/>
            <person name="Piazza S."/>
            <person name="Reed J."/>
            <person name="Reid J.F."/>
            <person name="Ring B.Z."/>
            <person name="Ringwald M."/>
            <person name="Rost B."/>
            <person name="Ruan Y."/>
            <person name="Salzberg S.L."/>
            <person name="Sandelin A."/>
            <person name="Schneider C."/>
            <person name="Schoenbach C."/>
            <person name="Sekiguchi K."/>
            <person name="Semple C.A."/>
            <person name="Seno S."/>
            <person name="Sessa L."/>
            <person name="Sheng Y."/>
            <person name="Shibata Y."/>
            <person name="Shimada H."/>
            <person name="Shimada K."/>
            <person name="Silva D."/>
            <person name="Sinclair B."/>
            <person name="Sperling S."/>
            <person name="Stupka E."/>
            <person name="Sugiura K."/>
            <person name="Sultana R."/>
            <person name="Takenaka Y."/>
            <person name="Taki K."/>
            <person name="Tammoja K."/>
            <person name="Tan S.L."/>
            <person name="Tang S."/>
            <person name="Taylor M.S."/>
            <person name="Tegner J."/>
            <person name="Teichmann S.A."/>
            <person name="Ueda H.R."/>
            <person name="van Nimwegen E."/>
            <person name="Verardo R."/>
            <person name="Wei C.L."/>
            <person name="Yagi K."/>
            <person name="Yamanishi H."/>
            <person name="Zabarovsky E."/>
            <person name="Zhu S."/>
            <person name="Zimmer A."/>
            <person name="Hide W."/>
            <person name="Bult C."/>
            <person name="Grimmond S.M."/>
            <person name="Teasdale R.D."/>
            <person name="Liu E.T."/>
            <person name="Brusic V."/>
            <person name="Quackenbush J."/>
            <person name="Wahlestedt C."/>
            <person name="Mattick J.S."/>
            <person name="Hume D.A."/>
            <person name="Kai C."/>
            <person name="Sasaki D."/>
            <person name="Tomaru Y."/>
            <person name="Fukuda S."/>
            <person name="Kanamori-Katayama M."/>
            <person name="Suzuki M."/>
            <person name="Aoki J."/>
            <person name="Arakawa T."/>
            <person name="Iida J."/>
            <person name="Imamura K."/>
            <person name="Itoh M."/>
            <person name="Kato T."/>
            <person name="Kawaji H."/>
            <person name="Kawagashira N."/>
            <person name="Kawashima T."/>
            <person name="Kojima M."/>
            <person name="Kondo S."/>
            <person name="Konno H."/>
            <person name="Nakano K."/>
            <person name="Ninomiya N."/>
            <person name="Nishio T."/>
            <person name="Okada M."/>
            <person name="Plessy C."/>
            <person name="Shibata K."/>
            <person name="Shiraki T."/>
            <person name="Suzuki S."/>
            <person name="Tagami M."/>
            <person name="Waki K."/>
            <person name="Watahiki A."/>
            <person name="Okamura-Oho Y."/>
            <person name="Suzuki H."/>
            <person name="Kawai J."/>
            <person name="Hayashizaki Y."/>
        </authorList>
    </citation>
    <scope>NUCLEOTIDE SEQUENCE [LARGE SCALE MRNA] OF 25-391</scope>
    <source>
        <strain>C57BL/6J</strain>
        <tissue>Testis</tissue>
    </source>
</reference>
<reference key="4">
    <citation type="journal article" date="2010" name="Cell">
        <title>A tissue-specific atlas of mouse protein phosphorylation and expression.</title>
        <authorList>
            <person name="Huttlin E.L."/>
            <person name="Jedrychowski M.P."/>
            <person name="Elias J.E."/>
            <person name="Goswami T."/>
            <person name="Rad R."/>
            <person name="Beausoleil S.A."/>
            <person name="Villen J."/>
            <person name="Haas W."/>
            <person name="Sowa M.E."/>
            <person name="Gygi S.P."/>
        </authorList>
    </citation>
    <scope>IDENTIFICATION BY MASS SPECTROMETRY [LARGE SCALE ANALYSIS]</scope>
    <source>
        <tissue>Pancreas</tissue>
    </source>
</reference>
<reference key="5">
    <citation type="journal article" date="2017" name="Nat. Commun.">
        <title>The non-canonical poly(A) polymerase FAM46C acts as an onco-suppressor in multiple myeloma.</title>
        <authorList>
            <person name="Mroczek S."/>
            <person name="Chlebowska J."/>
            <person name="Kulinski T.M."/>
            <person name="Gewartowska O."/>
            <person name="Gruchota J."/>
            <person name="Cysewski D."/>
            <person name="Liudkovska V."/>
            <person name="Borsuk E."/>
            <person name="Nowis D."/>
            <person name="Dziembowski A."/>
        </authorList>
    </citation>
    <scope>FUNCTION</scope>
    <scope>SUBCELLULAR LOCATION</scope>
    <scope>DISRUPTION PHENOTYPE</scope>
    <scope>INDUCTION BY IL4 AND LPS</scope>
    <scope>TISSUE SPECIFICITY</scope>
</reference>
<reference evidence="7" key="6">
    <citation type="journal article" date="2021" name="Cancer Commun. (Lond)">
        <title>Structural and functional characterization of multiple myeloma associated cytoplasmic poly(A) polymerase FAM46C.</title>
        <authorList>
            <person name="Zhang H."/>
            <person name="Zhang S.H."/>
            <person name="Hu J.L."/>
            <person name="Wu Y.T."/>
            <person name="Ma X.Y."/>
            <person name="Chen Y."/>
            <person name="Yu B."/>
            <person name="Liao S."/>
            <person name="Huang H."/>
            <person name="Gao S."/>
        </authorList>
    </citation>
    <scope>X-RAY CRYSTALLOGRAPHY (2.35 ANGSTROMS) OF 1-349</scope>
    <scope>CATALYTIC ACTIVITY</scope>
    <scope>FUNCTION</scope>
    <scope>MUTAGENESIS OF ASN-72; GLY-73; SER-74; GLY-77; ASP-90; ASP-92; CYS-146; GLU-166; ARG-175; ARG-240; SER-248; ARG-268; THR-290; HIS-295 AND ASP-298</scope>
</reference>
<protein>
    <recommendedName>
        <fullName evidence="4">Terminal nucleotidyltransferase 5C</fullName>
        <ecNumber evidence="3">2.7.7.19</ecNumber>
    </recommendedName>
</protein>
<keyword id="KW-0002">3D-structure</keyword>
<keyword id="KW-0963">Cytoplasm</keyword>
<keyword id="KW-0206">Cytoskeleton</keyword>
<keyword id="KW-0548">Nucleotidyltransferase</keyword>
<keyword id="KW-0539">Nucleus</keyword>
<keyword id="KW-1185">Reference proteome</keyword>
<keyword id="KW-0694">RNA-binding</keyword>
<keyword id="KW-0808">Transferase</keyword>
<feature type="chain" id="PRO_0000259935" description="Terminal nucleotidyltransferase 5C">
    <location>
        <begin position="1"/>
        <end position="391"/>
    </location>
</feature>
<feature type="mutagenesis site" description="Does not affect polynucleotide adenylyltransferase activity. Increases cell apoptosis." evidence="3">
    <original>N</original>
    <variation>A</variation>
    <location>
        <position position="72"/>
    </location>
</feature>
<feature type="mutagenesis site" description="Significantly increases polynucleotide adenylyltransferase activity." evidence="3">
    <original>N</original>
    <variation>H</variation>
    <location>
        <position position="72"/>
    </location>
</feature>
<feature type="mutagenesis site" description="Loss of polynucleotide adenylyltransferase activity." evidence="3">
    <original>G</original>
    <variation>A</variation>
    <location>
        <position position="73"/>
    </location>
</feature>
<feature type="mutagenesis site" description="Loss of polynucleotide adenylyltransferase activity." evidence="3">
    <original>S</original>
    <variation>A</variation>
    <location>
        <position position="74"/>
    </location>
</feature>
<feature type="mutagenesis site" description="Increases polynucleotide adenylyltransferase activity." evidence="3">
    <original>G</original>
    <variation>S</variation>
    <location>
        <position position="77"/>
    </location>
</feature>
<feature type="mutagenesis site" description="Loss of polynucleotide adenylyltransferase activity." evidence="3">
    <original>D</original>
    <variation>A</variation>
    <location>
        <position position="90"/>
    </location>
</feature>
<feature type="mutagenesis site" description="Loss of polynucleotide adenylyltransferase activity." evidence="3">
    <original>D</original>
    <variation>A</variation>
    <location>
        <position position="92"/>
    </location>
</feature>
<feature type="mutagenesis site" description="Significantly reduces polynucleotide adenylyltransferase activity." evidence="3">
    <original>C</original>
    <variation>A</variation>
    <location>
        <position position="146"/>
    </location>
</feature>
<feature type="mutagenesis site" description="Loss of polynucleotide adenylyltransferase activity." evidence="3">
    <original>E</original>
    <variation>A</variation>
    <location>
        <position position="166"/>
    </location>
</feature>
<feature type="mutagenesis site" description="Loss of polynucleotide adenylyltransferase activity." evidence="3">
    <original>R</original>
    <variation>A</variation>
    <location>
        <position position="175"/>
    </location>
</feature>
<feature type="mutagenesis site" description="Loss of polynucleotide adenylyltransferase activity." evidence="3">
    <original>R</original>
    <variation>A</variation>
    <location>
        <position position="240"/>
    </location>
</feature>
<feature type="mutagenesis site" description="Does not affect polynucleotide adenylyltransferase activity. Increases cell apoptosis." evidence="3">
    <original>S</original>
    <variation>A</variation>
    <location>
        <position position="248"/>
    </location>
</feature>
<feature type="mutagenesis site" description="Significantly reduces polynucleotide adenylyltransferase activity." evidence="3">
    <original>R</original>
    <variation>A</variation>
    <location>
        <position position="268"/>
    </location>
</feature>
<feature type="mutagenesis site" description="Increases polynucleotide adenylyltransferase activity." evidence="3">
    <original>T</original>
    <variation>R</variation>
    <location>
        <position position="290"/>
    </location>
</feature>
<feature type="mutagenesis site" description="Loss of polynucleotide adenylyltransferase activity." evidence="3">
    <original>H</original>
    <variation>A</variation>
    <location>
        <position position="295"/>
    </location>
</feature>
<feature type="mutagenesis site" description="Increases polynucleotide adenylyltransferase activity." evidence="3">
    <original>D</original>
    <variation>G</variation>
    <location>
        <position position="298"/>
    </location>
</feature>
<feature type="sequence conflict" description="In Ref. 3; BAB29768." evidence="4" ref="3">
    <original>Q</original>
    <variation>H</variation>
    <location>
        <position position="185"/>
    </location>
</feature>
<feature type="sequence conflict" description="In Ref. 3; BAB29768." evidence="4" ref="3">
    <original>R</original>
    <variation>G</variation>
    <location>
        <position position="339"/>
    </location>
</feature>
<feature type="helix" evidence="8">
    <location>
        <begin position="11"/>
        <end position="13"/>
    </location>
</feature>
<feature type="strand" evidence="8">
    <location>
        <begin position="14"/>
        <end position="16"/>
    </location>
</feature>
<feature type="helix" evidence="8">
    <location>
        <begin position="19"/>
        <end position="30"/>
    </location>
</feature>
<feature type="strand" evidence="8">
    <location>
        <begin position="33"/>
        <end position="35"/>
    </location>
</feature>
<feature type="strand" evidence="8">
    <location>
        <begin position="38"/>
        <end position="40"/>
    </location>
</feature>
<feature type="strand" evidence="8">
    <location>
        <begin position="44"/>
        <end position="46"/>
    </location>
</feature>
<feature type="helix" evidence="8">
    <location>
        <begin position="48"/>
        <end position="61"/>
    </location>
</feature>
<feature type="strand" evidence="8">
    <location>
        <begin position="66"/>
        <end position="72"/>
    </location>
</feature>
<feature type="helix" evidence="8">
    <location>
        <begin position="74"/>
        <end position="80"/>
    </location>
</feature>
<feature type="strand" evidence="8">
    <location>
        <begin position="90"/>
        <end position="97"/>
    </location>
</feature>
<feature type="helix" evidence="8">
    <location>
        <begin position="102"/>
        <end position="118"/>
    </location>
</feature>
<feature type="helix" evidence="8">
    <location>
        <begin position="131"/>
        <end position="138"/>
    </location>
</feature>
<feature type="strand" evidence="8">
    <location>
        <begin position="139"/>
        <end position="149"/>
    </location>
</feature>
<feature type="strand" evidence="8">
    <location>
        <begin position="151"/>
        <end position="157"/>
    </location>
</feature>
<feature type="strand" evidence="8">
    <location>
        <begin position="164"/>
        <end position="172"/>
    </location>
</feature>
<feature type="helix" evidence="8">
    <location>
        <begin position="180"/>
        <end position="182"/>
    </location>
</feature>
<feature type="strand" evidence="8">
    <location>
        <begin position="184"/>
        <end position="187"/>
    </location>
</feature>
<feature type="helix" evidence="8">
    <location>
        <begin position="189"/>
        <end position="197"/>
    </location>
</feature>
<feature type="strand" evidence="8">
    <location>
        <begin position="204"/>
        <end position="206"/>
    </location>
</feature>
<feature type="strand" evidence="8">
    <location>
        <begin position="211"/>
        <end position="214"/>
    </location>
</feature>
<feature type="helix" evidence="8">
    <location>
        <begin position="219"/>
        <end position="228"/>
    </location>
</feature>
<feature type="helix" evidence="8">
    <location>
        <begin position="236"/>
        <end position="238"/>
    </location>
</feature>
<feature type="helix" evidence="8">
    <location>
        <begin position="243"/>
        <end position="252"/>
    </location>
</feature>
<feature type="strand" evidence="8">
    <location>
        <begin position="256"/>
        <end position="259"/>
    </location>
</feature>
<feature type="turn" evidence="8">
    <location>
        <begin position="260"/>
        <end position="262"/>
    </location>
</feature>
<feature type="helix" evidence="8">
    <location>
        <begin position="263"/>
        <end position="277"/>
    </location>
</feature>
<feature type="helix" evidence="8">
    <location>
        <begin position="281"/>
        <end position="295"/>
    </location>
</feature>
<feature type="helix" evidence="8">
    <location>
        <begin position="300"/>
        <end position="317"/>
    </location>
</feature>
<feature type="helix" evidence="8">
    <location>
        <begin position="320"/>
        <end position="322"/>
    </location>
</feature>
<feature type="helix" evidence="8">
    <location>
        <begin position="323"/>
        <end position="342"/>
    </location>
</feature>
<sequence length="391" mass="44797">MAEEGSSTKDSESFSVLNWDQVSRLHEVLTEVVPIHGRGNFPTLEITLKDIVQTVRGRLEEAGINVQDVRLNGSAAGHVLVKDNGLGCKDLDLIFHVALPTEAEFQLVRDVVLCSLLNFLPEGVNKLKISPVTLKEAYVQKLVKVCTDTDRWSLISLSNKNGRNVELKFVDSIRRQFEFSVDSFQIILDSLLFFYDCSGNPISEHFHPTVIGESMYGDFEEAFDHLQNRLIATKNPEEIRGGGLLKYSNLLVRDFRPADQEEIKTLERYMCSRFFIDFPDILEQQRKLETYLQNHFSDEERSKYDYLMILRRVVNESTVCLMGHERRQTLNLISLLALRVLAEQNIIPSATNVTCYYQPAPYVSDGNFNNYYIAHPPITYSQPYPTWLPCN</sequence>
<accession>Q5SSF7</accession>
<accession>Q0P629</accession>
<accession>Q80XL2</accession>
<accession>Q9CUN7</accession>
<comment type="function">
    <text evidence="1 2 3">Catalyzes the transfer of one adenosine molecule from an ATP to an mRNA poly(A) tail bearing a 3'-OH terminal group and enhances mRNA stability and gene expression (PubMed:34048638). Can also elongate RNA oligos ending with uridine molecule, provided that the sequence is adenosine-rich (By similarity). Mainly targets mRNAs encoding endoplasmic reticulum-targeted protein (PubMed:28931820).</text>
</comment>
<comment type="catalytic activity">
    <reaction evidence="3">
        <text>RNA(n) + ATP = RNA(n)-3'-adenine ribonucleotide + diphosphate</text>
        <dbReference type="Rhea" id="RHEA:11332"/>
        <dbReference type="Rhea" id="RHEA-COMP:14527"/>
        <dbReference type="Rhea" id="RHEA-COMP:17347"/>
        <dbReference type="ChEBI" id="CHEBI:30616"/>
        <dbReference type="ChEBI" id="CHEBI:33019"/>
        <dbReference type="ChEBI" id="CHEBI:140395"/>
        <dbReference type="ChEBI" id="CHEBI:173115"/>
        <dbReference type="EC" id="2.7.7.19"/>
    </reaction>
    <physiologicalReaction direction="left-to-right" evidence="5">
        <dbReference type="Rhea" id="RHEA:11333"/>
    </physiologicalReaction>
</comment>
<comment type="subunit">
    <text evidence="1">Interacts with BCCIP and PABPC1; the interaction has no effect on TENT5C poly(A) polymerase function. Interacts with PLK4; this interaction leads to the TENT5C recruitment into the centrosome.</text>
</comment>
<comment type="subcellular location">
    <subcellularLocation>
        <location evidence="1">Nucleus</location>
    </subcellularLocation>
    <subcellularLocation>
        <location evidence="2">Cytoplasm</location>
    </subcellularLocation>
    <subcellularLocation>
        <location evidence="1">Cytoplasm</location>
        <location evidence="1">Cytoskeleton</location>
        <location evidence="1">Microtubule organizing center</location>
        <location evidence="1">Centrosome</location>
    </subcellularLocation>
    <text evidence="1">Recruited into the centrosome through its interaction with PLK4.</text>
</comment>
<comment type="tissue specificity">
    <text evidence="2">Expressed by splenocytes, expression is increased in activated splenocytes.</text>
</comment>
<comment type="induction">
    <text evidence="2">In splenocytes, expression is highly induced after yctivation by IL4 and LPS.</text>
</comment>
<comment type="disruption phenotype">
    <text evidence="2">Animals do not display major developmental phenotypes. They suffer from anemia with lower hemoglobin levels compared to controls. They have increased proliferation of B cells.</text>
</comment>
<comment type="similarity">
    <text evidence="4">Belongs to the TENT family.</text>
</comment>
<comment type="sequence caution" evidence="4">
    <conflict type="erroneous initiation">
        <sequence resource="EMBL-CDS" id="AAH37072"/>
    </conflict>
    <text>Extended N-terminus.</text>
</comment>
<comment type="sequence caution" evidence="4">
    <conflict type="erroneous initiation">
        <sequence resource="EMBL-CDS" id="AAH46309"/>
    </conflict>
    <text>Extended N-terminus.</text>
</comment>
<proteinExistence type="evidence at protein level"/>
<organism>
    <name type="scientific">Mus musculus</name>
    <name type="common">Mouse</name>
    <dbReference type="NCBI Taxonomy" id="10090"/>
    <lineage>
        <taxon>Eukaryota</taxon>
        <taxon>Metazoa</taxon>
        <taxon>Chordata</taxon>
        <taxon>Craniata</taxon>
        <taxon>Vertebrata</taxon>
        <taxon>Euteleostomi</taxon>
        <taxon>Mammalia</taxon>
        <taxon>Eutheria</taxon>
        <taxon>Euarchontoglires</taxon>
        <taxon>Glires</taxon>
        <taxon>Rodentia</taxon>
        <taxon>Myomorpha</taxon>
        <taxon>Muroidea</taxon>
        <taxon>Muridae</taxon>
        <taxon>Murinae</taxon>
        <taxon>Mus</taxon>
        <taxon>Mus</taxon>
    </lineage>
</organism>
<gene>
    <name evidence="1" type="primary">Tent5c</name>
    <name evidence="6" type="synonym">Fam46c</name>
</gene>
<name>TET5C_MOUSE</name>
<dbReference type="EC" id="2.7.7.19" evidence="3"/>
<dbReference type="EMBL" id="AL663099">
    <property type="status" value="NOT_ANNOTATED_CDS"/>
    <property type="molecule type" value="Genomic_DNA"/>
</dbReference>
<dbReference type="EMBL" id="BC037072">
    <property type="protein sequence ID" value="AAH37072.1"/>
    <property type="status" value="ALT_INIT"/>
    <property type="molecule type" value="mRNA"/>
</dbReference>
<dbReference type="EMBL" id="BC046309">
    <property type="protein sequence ID" value="AAH46309.1"/>
    <property type="status" value="ALT_INIT"/>
    <property type="molecule type" value="mRNA"/>
</dbReference>
<dbReference type="EMBL" id="BC120717">
    <property type="protein sequence ID" value="AAI20718.1"/>
    <property type="molecule type" value="mRNA"/>
</dbReference>
<dbReference type="EMBL" id="BC120719">
    <property type="protein sequence ID" value="AAI20720.1"/>
    <property type="molecule type" value="mRNA"/>
</dbReference>
<dbReference type="EMBL" id="AK015259">
    <property type="protein sequence ID" value="BAB29768.1"/>
    <property type="molecule type" value="mRNA"/>
</dbReference>
<dbReference type="CCDS" id="CCDS51017.1"/>
<dbReference type="RefSeq" id="NP_001136424.1">
    <property type="nucleotide sequence ID" value="NM_001142952.1"/>
</dbReference>
<dbReference type="RefSeq" id="XP_006502275.1">
    <property type="nucleotide sequence ID" value="XM_006502212.4"/>
</dbReference>
<dbReference type="PDB" id="7CQZ">
    <property type="method" value="X-ray"/>
    <property type="resolution" value="2.35 A"/>
    <property type="chains" value="A=1-349"/>
</dbReference>
<dbReference type="PDBsum" id="7CQZ"/>
<dbReference type="SMR" id="Q5SSF7"/>
<dbReference type="FunCoup" id="Q5SSF7">
    <property type="interactions" value="1758"/>
</dbReference>
<dbReference type="STRING" id="10090.ENSMUSP00000056872"/>
<dbReference type="PhosphoSitePlus" id="Q5SSF7"/>
<dbReference type="jPOST" id="Q5SSF7"/>
<dbReference type="PaxDb" id="10090-ENSMUSP00000056872"/>
<dbReference type="ProteomicsDB" id="271841"/>
<dbReference type="Antibodypedia" id="33893">
    <property type="antibodies" value="106 antibodies from 20 providers"/>
</dbReference>
<dbReference type="Ensembl" id="ENSMUST00000061455.9">
    <property type="protein sequence ID" value="ENSMUSP00000056872.9"/>
    <property type="gene ID" value="ENSMUSG00000044468.15"/>
</dbReference>
<dbReference type="GeneID" id="74645"/>
<dbReference type="KEGG" id="mmu:74645"/>
<dbReference type="UCSC" id="uc008qqu.2">
    <property type="organism name" value="mouse"/>
</dbReference>
<dbReference type="AGR" id="MGI:1921895"/>
<dbReference type="CTD" id="54855"/>
<dbReference type="MGI" id="MGI:1921895">
    <property type="gene designation" value="Tent5c"/>
</dbReference>
<dbReference type="VEuPathDB" id="HostDB:ENSMUSG00000044468"/>
<dbReference type="eggNOG" id="KOG3852">
    <property type="taxonomic scope" value="Eukaryota"/>
</dbReference>
<dbReference type="GeneTree" id="ENSGT00940000158856"/>
<dbReference type="HOGENOM" id="CLU_008115_2_0_1"/>
<dbReference type="InParanoid" id="Q5SSF7"/>
<dbReference type="OMA" id="TWDQVSR"/>
<dbReference type="OrthoDB" id="10065073at2759"/>
<dbReference type="PhylomeDB" id="Q5SSF7"/>
<dbReference type="TreeFam" id="TF315239"/>
<dbReference type="BRENDA" id="2.7.7.19">
    <property type="organism ID" value="3474"/>
</dbReference>
<dbReference type="BioGRID-ORCS" id="74645">
    <property type="hits" value="4 hits in 79 CRISPR screens"/>
</dbReference>
<dbReference type="ChiTaRS" id="Fam46c">
    <property type="organism name" value="mouse"/>
</dbReference>
<dbReference type="PRO" id="PR:Q5SSF7"/>
<dbReference type="Proteomes" id="UP000000589">
    <property type="component" value="Chromosome 3"/>
</dbReference>
<dbReference type="RNAct" id="Q5SSF7">
    <property type="molecule type" value="protein"/>
</dbReference>
<dbReference type="Bgee" id="ENSMUSG00000044468">
    <property type="expression patterns" value="Expressed in blood and 212 other cell types or tissues"/>
</dbReference>
<dbReference type="GO" id="GO:0005813">
    <property type="term" value="C:centrosome"/>
    <property type="evidence" value="ECO:0000250"/>
    <property type="project" value="UniProtKB"/>
</dbReference>
<dbReference type="GO" id="GO:0005737">
    <property type="term" value="C:cytoplasm"/>
    <property type="evidence" value="ECO:0000314"/>
    <property type="project" value="UniProtKB"/>
</dbReference>
<dbReference type="GO" id="GO:0005654">
    <property type="term" value="C:nucleoplasm"/>
    <property type="evidence" value="ECO:0007669"/>
    <property type="project" value="Ensembl"/>
</dbReference>
<dbReference type="GO" id="GO:0005634">
    <property type="term" value="C:nucleus"/>
    <property type="evidence" value="ECO:0000250"/>
    <property type="project" value="UniProtKB"/>
</dbReference>
<dbReference type="GO" id="GO:1990817">
    <property type="term" value="F:poly(A) RNA polymerase activity"/>
    <property type="evidence" value="ECO:0000315"/>
    <property type="project" value="UniProtKB"/>
</dbReference>
<dbReference type="GO" id="GO:0003723">
    <property type="term" value="F:RNA binding"/>
    <property type="evidence" value="ECO:0007669"/>
    <property type="project" value="UniProtKB-KW"/>
</dbReference>
<dbReference type="GO" id="GO:0001701">
    <property type="term" value="P:in utero embryonic development"/>
    <property type="evidence" value="ECO:0000315"/>
    <property type="project" value="MGI"/>
</dbReference>
<dbReference type="GO" id="GO:0048255">
    <property type="term" value="P:mRNA stabilization"/>
    <property type="evidence" value="ECO:0000315"/>
    <property type="project" value="UniProtKB"/>
</dbReference>
<dbReference type="GO" id="GO:0045596">
    <property type="term" value="P:negative regulation of cell differentiation"/>
    <property type="evidence" value="ECO:0000250"/>
    <property type="project" value="UniProtKB"/>
</dbReference>
<dbReference type="InterPro" id="IPR012937">
    <property type="entry name" value="TET5"/>
</dbReference>
<dbReference type="PANTHER" id="PTHR12974">
    <property type="entry name" value="PRION-LIKE- Q/N-RICH -DOMAIN-BEARING PROTEIN PROTEIN 44"/>
    <property type="match status" value="1"/>
</dbReference>
<dbReference type="PANTHER" id="PTHR12974:SF34">
    <property type="entry name" value="TERMINAL NUCLEOTIDYLTRANSFERASE 5C"/>
    <property type="match status" value="1"/>
</dbReference>
<dbReference type="Pfam" id="PF07984">
    <property type="entry name" value="NTP_transf_7"/>
    <property type="match status" value="1"/>
</dbReference>
<dbReference type="SMART" id="SM01153">
    <property type="entry name" value="DUF1693"/>
    <property type="match status" value="1"/>
</dbReference>
<evidence type="ECO:0000250" key="1">
    <source>
        <dbReference type="UniProtKB" id="Q5VWP2"/>
    </source>
</evidence>
<evidence type="ECO:0000269" key="2">
    <source>
    </source>
</evidence>
<evidence type="ECO:0000269" key="3">
    <source>
    </source>
</evidence>
<evidence type="ECO:0000305" key="4"/>
<evidence type="ECO:0000305" key="5">
    <source>
    </source>
</evidence>
<evidence type="ECO:0000312" key="6">
    <source>
        <dbReference type="MGI" id="MGI:1921895"/>
    </source>
</evidence>
<evidence type="ECO:0007744" key="7">
    <source>
        <dbReference type="PDB" id="7CQZ"/>
    </source>
</evidence>
<evidence type="ECO:0007829" key="8">
    <source>
        <dbReference type="PDB" id="7CQZ"/>
    </source>
</evidence>